<name>HUTH_SYMTH</name>
<feature type="chain" id="PRO_0000161043" description="Histidine ammonia-lyase">
    <location>
        <begin position="1"/>
        <end position="507"/>
    </location>
</feature>
<feature type="modified residue" description="2,3-didehydroalanine (Ser)" evidence="1">
    <location>
        <position position="143"/>
    </location>
</feature>
<feature type="cross-link" description="5-imidazolinone (Ala-Gly)" evidence="1">
    <location>
        <begin position="142"/>
        <end position="144"/>
    </location>
</feature>
<protein>
    <recommendedName>
        <fullName evidence="1">Histidine ammonia-lyase</fullName>
        <shortName evidence="1">Histidase</shortName>
        <ecNumber evidence="1">4.3.1.3</ecNumber>
    </recommendedName>
</protein>
<sequence length="507" mass="53709">MEAVELGAHLTLPEVVAVARHGARVVLTPEVRQRVARASEMVERLVRERRPVYGITTGFGKFSDVPISAEQTEALQRNLLMSHACAVGEPLAAEVVRAMLLLRAQALSRGHSGIRAETLEMLVAFLNLGLTPVVPEQGSLGASGDLAPLAHMSLPLIGLGEAVVNGERLSGAEALQRVGLRPLTLTAKEGLALINGTQAMTALGSLGLHDAQVLLKTADIAAAMTAEALGAIPAAWDPRVQALRLHTGQQAAARNLRRLTEGSRLTTRPGQMRTQDPYTLRCLPQVHGASRTAIEHVAQVLDWEMNAVTDNPLLFPDDDEVISGGNFHGQPVALALDYLAIAVAELGDIAERRIERLVNPQLSGLPAFLTRNGGVHSGLMITQYTAASLVSENKVLAHPASVDSIPSSANQEDHVSMGTTAARKARQVIANVRRVLAIELLCAAQALEFVGPERLAPATRAAYAAIRERVAPLSGDRVLAPDIEALAELVHNGELVAAVEAVAGPLE</sequence>
<comment type="catalytic activity">
    <reaction evidence="1">
        <text>L-histidine = trans-urocanate + NH4(+)</text>
        <dbReference type="Rhea" id="RHEA:21232"/>
        <dbReference type="ChEBI" id="CHEBI:17771"/>
        <dbReference type="ChEBI" id="CHEBI:28938"/>
        <dbReference type="ChEBI" id="CHEBI:57595"/>
        <dbReference type="EC" id="4.3.1.3"/>
    </reaction>
</comment>
<comment type="pathway">
    <text evidence="1">Amino-acid degradation; L-histidine degradation into L-glutamate; N-formimidoyl-L-glutamate from L-histidine: step 1/3.</text>
</comment>
<comment type="subcellular location">
    <subcellularLocation>
        <location evidence="1">Cytoplasm</location>
    </subcellularLocation>
</comment>
<comment type="PTM">
    <text evidence="1">Contains an active site 4-methylidene-imidazol-5-one (MIO), which is formed autocatalytically by cyclization and dehydration of residues Ala-Ser-Gly.</text>
</comment>
<comment type="similarity">
    <text evidence="1">Belongs to the PAL/histidase family.</text>
</comment>
<gene>
    <name evidence="1" type="primary">hutH</name>
    <name type="ordered locus">STH3194</name>
</gene>
<organism>
    <name type="scientific">Symbiobacterium thermophilum (strain DSM 24528 / JCM 14929 / IAM 14863 / T)</name>
    <dbReference type="NCBI Taxonomy" id="292459"/>
    <lineage>
        <taxon>Bacteria</taxon>
        <taxon>Bacillati</taxon>
        <taxon>Bacillota</taxon>
        <taxon>Clostridia</taxon>
        <taxon>Eubacteriales</taxon>
        <taxon>Symbiobacteriaceae</taxon>
        <taxon>Symbiobacterium</taxon>
    </lineage>
</organism>
<accession>Q67JH4</accession>
<keyword id="KW-0963">Cytoplasm</keyword>
<keyword id="KW-0369">Histidine metabolism</keyword>
<keyword id="KW-0456">Lyase</keyword>
<keyword id="KW-1185">Reference proteome</keyword>
<evidence type="ECO:0000255" key="1">
    <source>
        <dbReference type="HAMAP-Rule" id="MF_00229"/>
    </source>
</evidence>
<reference key="1">
    <citation type="journal article" date="2004" name="Nucleic Acids Res.">
        <title>Genome sequence of Symbiobacterium thermophilum, an uncultivable bacterium that depends on microbial commensalism.</title>
        <authorList>
            <person name="Ueda K."/>
            <person name="Yamashita A."/>
            <person name="Ishikawa J."/>
            <person name="Shimada M."/>
            <person name="Watsuji T."/>
            <person name="Morimura K."/>
            <person name="Ikeda H."/>
            <person name="Hattori M."/>
            <person name="Beppu T."/>
        </authorList>
    </citation>
    <scope>NUCLEOTIDE SEQUENCE [LARGE SCALE GENOMIC DNA]</scope>
    <source>
        <strain>DSM 24528 / JCM 14929 / IAM 14863 / T</strain>
    </source>
</reference>
<proteinExistence type="inferred from homology"/>
<dbReference type="EC" id="4.3.1.3" evidence="1"/>
<dbReference type="EMBL" id="AP006840">
    <property type="protein sequence ID" value="BAD42176.1"/>
    <property type="molecule type" value="Genomic_DNA"/>
</dbReference>
<dbReference type="RefSeq" id="WP_011197307.1">
    <property type="nucleotide sequence ID" value="NC_006177.1"/>
</dbReference>
<dbReference type="SMR" id="Q67JH4"/>
<dbReference type="STRING" id="292459.STH3194"/>
<dbReference type="KEGG" id="sth:STH3194"/>
<dbReference type="eggNOG" id="COG2986">
    <property type="taxonomic scope" value="Bacteria"/>
</dbReference>
<dbReference type="HOGENOM" id="CLU_014801_4_0_9"/>
<dbReference type="OrthoDB" id="9806955at2"/>
<dbReference type="UniPathway" id="UPA00379">
    <property type="reaction ID" value="UER00549"/>
</dbReference>
<dbReference type="Proteomes" id="UP000000417">
    <property type="component" value="Chromosome"/>
</dbReference>
<dbReference type="GO" id="GO:0005737">
    <property type="term" value="C:cytoplasm"/>
    <property type="evidence" value="ECO:0007669"/>
    <property type="project" value="UniProtKB-SubCell"/>
</dbReference>
<dbReference type="GO" id="GO:0004397">
    <property type="term" value="F:histidine ammonia-lyase activity"/>
    <property type="evidence" value="ECO:0007669"/>
    <property type="project" value="UniProtKB-UniRule"/>
</dbReference>
<dbReference type="GO" id="GO:0019556">
    <property type="term" value="P:L-histidine catabolic process to glutamate and formamide"/>
    <property type="evidence" value="ECO:0007669"/>
    <property type="project" value="UniProtKB-UniPathway"/>
</dbReference>
<dbReference type="GO" id="GO:0019557">
    <property type="term" value="P:L-histidine catabolic process to glutamate and formate"/>
    <property type="evidence" value="ECO:0007669"/>
    <property type="project" value="UniProtKB-UniPathway"/>
</dbReference>
<dbReference type="CDD" id="cd00332">
    <property type="entry name" value="PAL-HAL"/>
    <property type="match status" value="1"/>
</dbReference>
<dbReference type="FunFam" id="1.10.275.10:FF:000005">
    <property type="entry name" value="Histidine ammonia-lyase"/>
    <property type="match status" value="1"/>
</dbReference>
<dbReference type="FunFam" id="1.20.200.10:FF:000003">
    <property type="entry name" value="Histidine ammonia-lyase"/>
    <property type="match status" value="1"/>
</dbReference>
<dbReference type="Gene3D" id="1.20.200.10">
    <property type="entry name" value="Fumarase/aspartase (Central domain)"/>
    <property type="match status" value="1"/>
</dbReference>
<dbReference type="Gene3D" id="1.10.275.10">
    <property type="entry name" value="Fumarase/aspartase (N-terminal domain)"/>
    <property type="match status" value="1"/>
</dbReference>
<dbReference type="HAMAP" id="MF_00229">
    <property type="entry name" value="His_ammonia_lyase"/>
    <property type="match status" value="1"/>
</dbReference>
<dbReference type="InterPro" id="IPR001106">
    <property type="entry name" value="Aromatic_Lyase"/>
</dbReference>
<dbReference type="InterPro" id="IPR024083">
    <property type="entry name" value="Fumarase/histidase_N"/>
</dbReference>
<dbReference type="InterPro" id="IPR005921">
    <property type="entry name" value="HutH"/>
</dbReference>
<dbReference type="InterPro" id="IPR008948">
    <property type="entry name" value="L-Aspartase-like"/>
</dbReference>
<dbReference type="InterPro" id="IPR022313">
    <property type="entry name" value="Phe/His_NH3-lyase_AS"/>
</dbReference>
<dbReference type="NCBIfam" id="TIGR01225">
    <property type="entry name" value="hutH"/>
    <property type="match status" value="1"/>
</dbReference>
<dbReference type="NCBIfam" id="NF006871">
    <property type="entry name" value="PRK09367.1"/>
    <property type="match status" value="1"/>
</dbReference>
<dbReference type="PANTHER" id="PTHR10362">
    <property type="entry name" value="HISTIDINE AMMONIA-LYASE"/>
    <property type="match status" value="1"/>
</dbReference>
<dbReference type="Pfam" id="PF00221">
    <property type="entry name" value="Lyase_aromatic"/>
    <property type="match status" value="1"/>
</dbReference>
<dbReference type="SUPFAM" id="SSF48557">
    <property type="entry name" value="L-aspartase-like"/>
    <property type="match status" value="1"/>
</dbReference>
<dbReference type="PROSITE" id="PS00488">
    <property type="entry name" value="PAL_HISTIDASE"/>
    <property type="match status" value="1"/>
</dbReference>